<dbReference type="EC" id="3.5.1.5" evidence="1"/>
<dbReference type="EMBL" id="CP000614">
    <property type="protein sequence ID" value="ABO53845.1"/>
    <property type="molecule type" value="Genomic_DNA"/>
</dbReference>
<dbReference type="SMR" id="A4JC42"/>
<dbReference type="MEROPS" id="M38.982"/>
<dbReference type="KEGG" id="bvi:Bcep1808_0833"/>
<dbReference type="eggNOG" id="COG0804">
    <property type="taxonomic scope" value="Bacteria"/>
</dbReference>
<dbReference type="HOGENOM" id="CLU_000980_0_0_4"/>
<dbReference type="UniPathway" id="UPA00258">
    <property type="reaction ID" value="UER00370"/>
</dbReference>
<dbReference type="Proteomes" id="UP000002287">
    <property type="component" value="Chromosome 1"/>
</dbReference>
<dbReference type="GO" id="GO:0005737">
    <property type="term" value="C:cytoplasm"/>
    <property type="evidence" value="ECO:0007669"/>
    <property type="project" value="UniProtKB-SubCell"/>
</dbReference>
<dbReference type="GO" id="GO:0016151">
    <property type="term" value="F:nickel cation binding"/>
    <property type="evidence" value="ECO:0007669"/>
    <property type="project" value="UniProtKB-UniRule"/>
</dbReference>
<dbReference type="GO" id="GO:0009039">
    <property type="term" value="F:urease activity"/>
    <property type="evidence" value="ECO:0007669"/>
    <property type="project" value="UniProtKB-UniRule"/>
</dbReference>
<dbReference type="GO" id="GO:0043419">
    <property type="term" value="P:urea catabolic process"/>
    <property type="evidence" value="ECO:0007669"/>
    <property type="project" value="UniProtKB-UniRule"/>
</dbReference>
<dbReference type="CDD" id="cd00375">
    <property type="entry name" value="Urease_alpha"/>
    <property type="match status" value="1"/>
</dbReference>
<dbReference type="Gene3D" id="3.20.20.140">
    <property type="entry name" value="Metal-dependent hydrolases"/>
    <property type="match status" value="1"/>
</dbReference>
<dbReference type="Gene3D" id="2.30.40.10">
    <property type="entry name" value="Urease, subunit C, domain 1"/>
    <property type="match status" value="1"/>
</dbReference>
<dbReference type="HAMAP" id="MF_01953">
    <property type="entry name" value="Urease_alpha"/>
    <property type="match status" value="1"/>
</dbReference>
<dbReference type="InterPro" id="IPR006680">
    <property type="entry name" value="Amidohydro-rel"/>
</dbReference>
<dbReference type="InterPro" id="IPR011059">
    <property type="entry name" value="Metal-dep_hydrolase_composite"/>
</dbReference>
<dbReference type="InterPro" id="IPR032466">
    <property type="entry name" value="Metal_Hydrolase"/>
</dbReference>
<dbReference type="InterPro" id="IPR011612">
    <property type="entry name" value="Urease_alpha_N_dom"/>
</dbReference>
<dbReference type="InterPro" id="IPR050112">
    <property type="entry name" value="Urease_alpha_subunit"/>
</dbReference>
<dbReference type="InterPro" id="IPR017950">
    <property type="entry name" value="Urease_AS"/>
</dbReference>
<dbReference type="InterPro" id="IPR005848">
    <property type="entry name" value="Urease_asu"/>
</dbReference>
<dbReference type="InterPro" id="IPR017951">
    <property type="entry name" value="Urease_asu_c"/>
</dbReference>
<dbReference type="InterPro" id="IPR029754">
    <property type="entry name" value="Urease_Ni-bd"/>
</dbReference>
<dbReference type="NCBIfam" id="NF009685">
    <property type="entry name" value="PRK13206.1"/>
    <property type="match status" value="1"/>
</dbReference>
<dbReference type="NCBIfam" id="NF009686">
    <property type="entry name" value="PRK13207.1"/>
    <property type="match status" value="1"/>
</dbReference>
<dbReference type="NCBIfam" id="TIGR01792">
    <property type="entry name" value="urease_alph"/>
    <property type="match status" value="1"/>
</dbReference>
<dbReference type="PANTHER" id="PTHR43440">
    <property type="entry name" value="UREASE"/>
    <property type="match status" value="1"/>
</dbReference>
<dbReference type="PANTHER" id="PTHR43440:SF1">
    <property type="entry name" value="UREASE"/>
    <property type="match status" value="1"/>
</dbReference>
<dbReference type="Pfam" id="PF01979">
    <property type="entry name" value="Amidohydro_1"/>
    <property type="match status" value="1"/>
</dbReference>
<dbReference type="Pfam" id="PF00449">
    <property type="entry name" value="Urease_alpha"/>
    <property type="match status" value="1"/>
</dbReference>
<dbReference type="PRINTS" id="PR01752">
    <property type="entry name" value="UREASE"/>
</dbReference>
<dbReference type="SUPFAM" id="SSF51338">
    <property type="entry name" value="Composite domain of metallo-dependent hydrolases"/>
    <property type="match status" value="2"/>
</dbReference>
<dbReference type="SUPFAM" id="SSF51556">
    <property type="entry name" value="Metallo-dependent hydrolases"/>
    <property type="match status" value="1"/>
</dbReference>
<dbReference type="PROSITE" id="PS01120">
    <property type="entry name" value="UREASE_1"/>
    <property type="match status" value="1"/>
</dbReference>
<dbReference type="PROSITE" id="PS00145">
    <property type="entry name" value="UREASE_2"/>
    <property type="match status" value="1"/>
</dbReference>
<dbReference type="PROSITE" id="PS51368">
    <property type="entry name" value="UREASE_3"/>
    <property type="match status" value="1"/>
</dbReference>
<organism>
    <name type="scientific">Burkholderia vietnamiensis (strain G4 / LMG 22486)</name>
    <name type="common">Burkholderia cepacia (strain R1808)</name>
    <dbReference type="NCBI Taxonomy" id="269482"/>
    <lineage>
        <taxon>Bacteria</taxon>
        <taxon>Pseudomonadati</taxon>
        <taxon>Pseudomonadota</taxon>
        <taxon>Betaproteobacteria</taxon>
        <taxon>Burkholderiales</taxon>
        <taxon>Burkholderiaceae</taxon>
        <taxon>Burkholderia</taxon>
        <taxon>Burkholderia cepacia complex</taxon>
    </lineage>
</organism>
<keyword id="KW-0963">Cytoplasm</keyword>
<keyword id="KW-0378">Hydrolase</keyword>
<keyword id="KW-0479">Metal-binding</keyword>
<keyword id="KW-0533">Nickel</keyword>
<gene>
    <name evidence="1" type="primary">ureC</name>
    <name type="ordered locus">Bcep1808_0833</name>
</gene>
<feature type="chain" id="PRO_1000073701" description="Urease subunit alpha">
    <location>
        <begin position="1"/>
        <end position="568"/>
    </location>
</feature>
<feature type="domain" description="Urease" evidence="1">
    <location>
        <begin position="130"/>
        <end position="568"/>
    </location>
</feature>
<feature type="active site" description="Proton donor" evidence="1">
    <location>
        <position position="321"/>
    </location>
</feature>
<feature type="binding site" evidence="1">
    <location>
        <position position="135"/>
    </location>
    <ligand>
        <name>Ni(2+)</name>
        <dbReference type="ChEBI" id="CHEBI:49786"/>
        <label>1</label>
    </ligand>
</feature>
<feature type="binding site" evidence="1">
    <location>
        <position position="137"/>
    </location>
    <ligand>
        <name>Ni(2+)</name>
        <dbReference type="ChEBI" id="CHEBI:49786"/>
        <label>1</label>
    </ligand>
</feature>
<feature type="binding site" description="via carbamate group" evidence="1">
    <location>
        <position position="218"/>
    </location>
    <ligand>
        <name>Ni(2+)</name>
        <dbReference type="ChEBI" id="CHEBI:49786"/>
        <label>1</label>
    </ligand>
</feature>
<feature type="binding site" description="via carbamate group" evidence="1">
    <location>
        <position position="218"/>
    </location>
    <ligand>
        <name>Ni(2+)</name>
        <dbReference type="ChEBI" id="CHEBI:49786"/>
        <label>2</label>
    </ligand>
</feature>
<feature type="binding site" evidence="1">
    <location>
        <position position="220"/>
    </location>
    <ligand>
        <name>substrate</name>
    </ligand>
</feature>
<feature type="binding site" evidence="1">
    <location>
        <position position="247"/>
    </location>
    <ligand>
        <name>Ni(2+)</name>
        <dbReference type="ChEBI" id="CHEBI:49786"/>
        <label>2</label>
    </ligand>
</feature>
<feature type="binding site" evidence="1">
    <location>
        <position position="273"/>
    </location>
    <ligand>
        <name>Ni(2+)</name>
        <dbReference type="ChEBI" id="CHEBI:49786"/>
        <label>2</label>
    </ligand>
</feature>
<feature type="binding site" evidence="1">
    <location>
        <position position="361"/>
    </location>
    <ligand>
        <name>Ni(2+)</name>
        <dbReference type="ChEBI" id="CHEBI:49786"/>
        <label>1</label>
    </ligand>
</feature>
<feature type="modified residue" description="N6-carboxylysine" evidence="1">
    <location>
        <position position="218"/>
    </location>
</feature>
<evidence type="ECO:0000255" key="1">
    <source>
        <dbReference type="HAMAP-Rule" id="MF_01953"/>
    </source>
</evidence>
<sequence length="568" mass="61031">MTLRLSRRAYAEMFGPTTGDRVRLADTELLIEIERDYTIYGEEVKFGGGKVIRDGMGQSQRVAADVPDTIITNAVILDHWGIVKADIAIKHGRIAAIGKAGNPDIQPGVTIAIGAATEVIAGEGLIVTAGGIDTHIHFISPQQIDEALASGVTTMLGGGTGPATGTNATTCTPGPWHMERMLQAADGWPINLGFLGKGNVSVPQPLVEQIAAGAIGLKLHEDWGTTPAAIDNCLSVADDTDTQVAIHTDTLNEGGFVESTVAAFKGRTIHTYHTEGAGGGHAPDILKVCGESNVLPSSTNPTRPYTINTLDEHLDMLMVCHHLDPSIAEDLAFAESRIRRETIAAEDILHDLGALSMLSSDSQAMGRVGEVIIRTWQTAHKMKVQRGALPEDNARNDNFRAKRYVAKYTINPAITHGIAHEVGSIEPGKWADLVLWEPAFFGIKPSMILKGGMIAMAQMGDPNASIPTPQPVHYREMFATRGGALARTSLTFVSQMAADAGIAERYGLAKWIVPVRNCRNVTKADMIHNAWRPSISVDPETYDVIADGQLLTCEPATVLPMAQRYFLF</sequence>
<reference key="1">
    <citation type="submission" date="2007-03" db="EMBL/GenBank/DDBJ databases">
        <title>Complete sequence of chromosome 1 of Burkholderia vietnamiensis G4.</title>
        <authorList>
            <consortium name="US DOE Joint Genome Institute"/>
            <person name="Copeland A."/>
            <person name="Lucas S."/>
            <person name="Lapidus A."/>
            <person name="Barry K."/>
            <person name="Detter J.C."/>
            <person name="Glavina del Rio T."/>
            <person name="Hammon N."/>
            <person name="Israni S."/>
            <person name="Dalin E."/>
            <person name="Tice H."/>
            <person name="Pitluck S."/>
            <person name="Chain P."/>
            <person name="Malfatti S."/>
            <person name="Shin M."/>
            <person name="Vergez L."/>
            <person name="Schmutz J."/>
            <person name="Larimer F."/>
            <person name="Land M."/>
            <person name="Hauser L."/>
            <person name="Kyrpides N."/>
            <person name="Tiedje J."/>
            <person name="Richardson P."/>
        </authorList>
    </citation>
    <scope>NUCLEOTIDE SEQUENCE [LARGE SCALE GENOMIC DNA]</scope>
    <source>
        <strain>G4 / LMG 22486</strain>
    </source>
</reference>
<comment type="catalytic activity">
    <reaction evidence="1">
        <text>urea + 2 H2O + H(+) = hydrogencarbonate + 2 NH4(+)</text>
        <dbReference type="Rhea" id="RHEA:20557"/>
        <dbReference type="ChEBI" id="CHEBI:15377"/>
        <dbReference type="ChEBI" id="CHEBI:15378"/>
        <dbReference type="ChEBI" id="CHEBI:16199"/>
        <dbReference type="ChEBI" id="CHEBI:17544"/>
        <dbReference type="ChEBI" id="CHEBI:28938"/>
        <dbReference type="EC" id="3.5.1.5"/>
    </reaction>
</comment>
<comment type="cofactor">
    <cofactor evidence="1">
        <name>Ni cation</name>
        <dbReference type="ChEBI" id="CHEBI:25516"/>
    </cofactor>
    <text evidence="1">Binds 2 nickel ions per subunit.</text>
</comment>
<comment type="pathway">
    <text evidence="1">Nitrogen metabolism; urea degradation; CO(2) and NH(3) from urea (urease route): step 1/1.</text>
</comment>
<comment type="subunit">
    <text evidence="1">Heterotrimer of UreA (gamma), UreB (beta) and UreC (alpha) subunits. Three heterotrimers associate to form the active enzyme.</text>
</comment>
<comment type="subcellular location">
    <subcellularLocation>
        <location evidence="1">Cytoplasm</location>
    </subcellularLocation>
</comment>
<comment type="PTM">
    <text evidence="1">Carboxylation allows a single lysine to coordinate two nickel ions.</text>
</comment>
<comment type="similarity">
    <text evidence="1">Belongs to the metallo-dependent hydrolases superfamily. Urease alpha subunit family.</text>
</comment>
<accession>A4JC42</accession>
<proteinExistence type="inferred from homology"/>
<protein>
    <recommendedName>
        <fullName evidence="1">Urease subunit alpha</fullName>
        <ecNumber evidence="1">3.5.1.5</ecNumber>
    </recommendedName>
    <alternativeName>
        <fullName evidence="1">Urea amidohydrolase subunit alpha</fullName>
    </alternativeName>
</protein>
<name>URE1_BURVG</name>